<sequence>MKVIKTLSIINFFIFVTFNIKNESKYSNTFINNAYNMSIRRSMAESKPPTGTGGSGSAGSGAGASAGNGANPGADAERSPSTPATPATPATTTTTTTTNDAEASTSTSSENPNHKNAETNPKGKGEVQKPNQANKETQNNSNVQQDSQTKSNVPPTQDADTKSPTAQPEQAENSAPTAEQTESPELQSAPENKGTGQHGHMHGSRNNHPQNTSDSQKECTDGNKENCGAATSLLNNSSNIASINKFVVLISATLVLSFAIFI</sequence>
<feature type="signal peptide" evidence="4">
    <location>
        <begin position="1"/>
        <end position="20"/>
    </location>
</feature>
<feature type="chain" id="PRO_0000024590" description="Merozoite surface protein 2">
    <location>
        <begin position="21"/>
        <end position="236"/>
    </location>
</feature>
<feature type="propeptide" id="PRO_0000024591" description="Removed in mature form" evidence="1">
    <location>
        <begin position="237"/>
        <end position="262"/>
    </location>
</feature>
<feature type="region of interest" description="Disordered" evidence="5">
    <location>
        <begin position="44"/>
        <end position="223"/>
    </location>
</feature>
<feature type="region of interest" description="Polymorphic region" evidence="6">
    <location>
        <begin position="44"/>
        <end position="188"/>
    </location>
</feature>
<feature type="compositionally biased region" description="Gly residues" evidence="5">
    <location>
        <begin position="51"/>
        <end position="66"/>
    </location>
</feature>
<feature type="compositionally biased region" description="Low complexity" evidence="5">
    <location>
        <begin position="67"/>
        <end position="111"/>
    </location>
</feature>
<feature type="compositionally biased region" description="Basic and acidic residues" evidence="5">
    <location>
        <begin position="112"/>
        <end position="127"/>
    </location>
</feature>
<feature type="compositionally biased region" description="Polar residues" evidence="5">
    <location>
        <begin position="129"/>
        <end position="155"/>
    </location>
</feature>
<feature type="compositionally biased region" description="Polar residues" evidence="5">
    <location>
        <begin position="162"/>
        <end position="190"/>
    </location>
</feature>
<feature type="lipid moiety-binding region" description="GPI-anchor amidated asparagine" evidence="1">
    <location>
        <position position="236"/>
    </location>
</feature>
<feature type="glycosylation site" description="N-linked (GlcNAc...) asparagine" evidence="4">
    <location>
        <position position="22"/>
    </location>
</feature>
<feature type="glycosylation site" description="N-linked (GlcNAc...) asparagine" evidence="4">
    <location>
        <position position="36"/>
    </location>
</feature>
<feature type="glycosylation site" description="N-linked (GlcNAc...) asparagine" evidence="4">
    <location>
        <position position="139"/>
    </location>
</feature>
<feature type="glycosylation site" description="N-linked (GlcNAc...) asparagine" evidence="4">
    <location>
        <position position="211"/>
    </location>
</feature>
<feature type="glycosylation site" description="N-linked (GlcNAc...) asparagine" evidence="4">
    <location>
        <position position="235"/>
    </location>
</feature>
<feature type="glycosylation site" description="N-linked (GlcNAc...) asparagine" evidence="4">
    <location>
        <position position="236"/>
    </location>
</feature>
<feature type="disulfide bond" evidence="2">
    <location>
        <begin position="219"/>
        <end position="227"/>
    </location>
</feature>
<accession>Q99317</accession>
<organism>
    <name type="scientific">Plasmodium falciparum (isolate Camp / Malaysia)</name>
    <dbReference type="NCBI Taxonomy" id="5835"/>
    <lineage>
        <taxon>Eukaryota</taxon>
        <taxon>Sar</taxon>
        <taxon>Alveolata</taxon>
        <taxon>Apicomplexa</taxon>
        <taxon>Aconoidasida</taxon>
        <taxon>Haemosporida</taxon>
        <taxon>Plasmodiidae</taxon>
        <taxon>Plasmodium</taxon>
        <taxon>Plasmodium (Laverania)</taxon>
    </lineage>
</organism>
<comment type="function">
    <text evidence="3">May play a role in the merozoite attachment to the erythrocyte.</text>
</comment>
<comment type="subcellular location">
    <subcellularLocation>
        <location evidence="3">Cell membrane</location>
        <topology evidence="1">Lipid-anchor</topology>
        <topology evidence="1">GPI-anchor</topology>
    </subcellularLocation>
    <text evidence="3">During host erythrocyte invasion by merozoites, carried into invaded erythrocytes where it is rapidly degraded.</text>
</comment>
<comment type="domain">
    <text evidence="3">The N-terminal region appears to be involved in lipid binding.</text>
</comment>
<comment type="polymorphism">
    <text evidence="6">The sequence varies across Plasmodium strains (PubMed:2090943). All variants share conserved N- and C-terminal regions; however, they belong to two allelic families, represented by 3D7 strain and FC27 strain sequences respectively, distinguished by tandem repeats and dimorphic flanking sequences within the central region of the protein (PubMed:2090943).</text>
</comment>
<dbReference type="EMBL" id="M60186">
    <property type="protein sequence ID" value="AAA29687.1"/>
    <property type="molecule type" value="Genomic_DNA"/>
</dbReference>
<dbReference type="GlyCosmos" id="Q99317">
    <property type="glycosylation" value="6 sites, No reported glycans"/>
</dbReference>
<dbReference type="OMA" id="PIENNSA"/>
<dbReference type="GO" id="GO:0005886">
    <property type="term" value="C:plasma membrane"/>
    <property type="evidence" value="ECO:0007669"/>
    <property type="project" value="UniProtKB-SubCell"/>
</dbReference>
<dbReference type="GO" id="GO:0098552">
    <property type="term" value="C:side of membrane"/>
    <property type="evidence" value="ECO:0007669"/>
    <property type="project" value="UniProtKB-KW"/>
</dbReference>
<dbReference type="GO" id="GO:0007155">
    <property type="term" value="P:cell adhesion"/>
    <property type="evidence" value="ECO:0007669"/>
    <property type="project" value="InterPro"/>
</dbReference>
<dbReference type="InterPro" id="IPR001136">
    <property type="entry name" value="MSA2"/>
</dbReference>
<dbReference type="Pfam" id="PF00985">
    <property type="entry name" value="MSA_2"/>
    <property type="match status" value="1"/>
</dbReference>
<dbReference type="PIRSF" id="PIRSF003575">
    <property type="entry name" value="MSA_2"/>
    <property type="match status" value="1"/>
</dbReference>
<name>MSA2_PLAFC</name>
<reference key="1">
    <citation type="journal article" date="1990" name="Mol. Biochem. Parasitol.">
        <title>Sequence comparison of allelic forms of the Plasmodium falciparum merozoite surface antigen MSA2.</title>
        <authorList>
            <person name="Thomas A.W."/>
            <person name="Carr D.A."/>
            <person name="Carter J.M."/>
            <person name="Lyon J.A."/>
        </authorList>
    </citation>
    <scope>NUCLEOTIDE SEQUENCE [GENOMIC DNA]</scope>
    <scope>POLYMORPHISM</scope>
</reference>
<proteinExistence type="inferred from homology"/>
<keyword id="KW-1003">Cell membrane</keyword>
<keyword id="KW-1015">Disulfide bond</keyword>
<keyword id="KW-0325">Glycoprotein</keyword>
<keyword id="KW-0336">GPI-anchor</keyword>
<keyword id="KW-0449">Lipoprotein</keyword>
<keyword id="KW-0461">Malaria</keyword>
<keyword id="KW-0472">Membrane</keyword>
<keyword id="KW-0477">Merozoite</keyword>
<keyword id="KW-0732">Signal</keyword>
<gene>
    <name evidence="3" type="primary">MSP2</name>
    <name evidence="7" type="synonym">MSA2</name>
</gene>
<evidence type="ECO:0000250" key="1">
    <source>
        <dbReference type="UniProtKB" id="P19260"/>
    </source>
</evidence>
<evidence type="ECO:0000250" key="2">
    <source>
        <dbReference type="UniProtKB" id="P19599"/>
    </source>
</evidence>
<evidence type="ECO:0000250" key="3">
    <source>
        <dbReference type="UniProtKB" id="P50498"/>
    </source>
</evidence>
<evidence type="ECO:0000255" key="4"/>
<evidence type="ECO:0000256" key="5">
    <source>
        <dbReference type="SAM" id="MobiDB-lite"/>
    </source>
</evidence>
<evidence type="ECO:0000269" key="6">
    <source>
    </source>
</evidence>
<evidence type="ECO:0000303" key="7">
    <source>
    </source>
</evidence>
<protein>
    <recommendedName>
        <fullName evidence="3">Merozoite surface protein 2</fullName>
    </recommendedName>
    <alternativeName>
        <fullName evidence="7">Merozoite surface antigen 2</fullName>
        <shortName evidence="7">MSA-2</shortName>
    </alternativeName>
</protein>